<accession>A5PJL1</accession>
<keyword id="KW-0325">Glycoprotein</keyword>
<keyword id="KW-0472">Membrane</keyword>
<keyword id="KW-0576">Peroxisome</keyword>
<keyword id="KW-1185">Reference proteome</keyword>
<keyword id="KW-0812">Transmembrane</keyword>
<keyword id="KW-1133">Transmembrane helix</keyword>
<name>PXMP4_BOVIN</name>
<evidence type="ECO:0000250" key="1"/>
<evidence type="ECO:0000255" key="2"/>
<evidence type="ECO:0000305" key="3"/>
<gene>
    <name type="primary">PXMP4</name>
</gene>
<reference key="1">
    <citation type="submission" date="2007-06" db="EMBL/GenBank/DDBJ databases">
        <authorList>
            <consortium name="NIH - Mammalian Gene Collection (MGC) project"/>
        </authorList>
    </citation>
    <scope>NUCLEOTIDE SEQUENCE [LARGE SCALE MRNA]</scope>
    <source>
        <strain>Hereford</strain>
        <tissue>Fetal muscle</tissue>
    </source>
</reference>
<sequence length="212" mass="24224">MVAPPQLRALLFAINALLSKRRYHAALAMLKGFRNGAVYGAKIRAPHALVMTFLFRSGSLREKLRAILQATYTHSWNLARFVFLYKGLCALQSHVQGKTYQAHSFVSAFIGGLLVFGNNNNINSQISMYLLSRVLFALCRLGVEKGFIPEPRLDPFPWFSGLVWGLVLWLFEYHRPTLQPSLQSSMTYLYEDSNVWHDLSDFFIYNKSQPSK</sequence>
<feature type="chain" id="PRO_0000317317" description="Peroxisomal membrane protein 4">
    <location>
        <begin position="1"/>
        <end position="212"/>
    </location>
</feature>
<feature type="transmembrane region" description="Helical" evidence="2">
    <location>
        <begin position="97"/>
        <end position="117"/>
    </location>
</feature>
<feature type="transmembrane region" description="Helical" evidence="2">
    <location>
        <begin position="153"/>
        <end position="173"/>
    </location>
</feature>
<feature type="glycosylation site" description="N-linked (GlcNAc...) asparagine" evidence="2">
    <location>
        <position position="206"/>
    </location>
</feature>
<organism>
    <name type="scientific">Bos taurus</name>
    <name type="common">Bovine</name>
    <dbReference type="NCBI Taxonomy" id="9913"/>
    <lineage>
        <taxon>Eukaryota</taxon>
        <taxon>Metazoa</taxon>
        <taxon>Chordata</taxon>
        <taxon>Craniata</taxon>
        <taxon>Vertebrata</taxon>
        <taxon>Euteleostomi</taxon>
        <taxon>Mammalia</taxon>
        <taxon>Eutheria</taxon>
        <taxon>Laurasiatheria</taxon>
        <taxon>Artiodactyla</taxon>
        <taxon>Ruminantia</taxon>
        <taxon>Pecora</taxon>
        <taxon>Bovidae</taxon>
        <taxon>Bovinae</taxon>
        <taxon>Bos</taxon>
    </lineage>
</organism>
<comment type="subunit">
    <text evidence="1">Interacts with PEX19.</text>
</comment>
<comment type="subcellular location">
    <subcellularLocation>
        <location evidence="1">Peroxisome membrane</location>
        <topology evidence="1">Multi-pass membrane protein</topology>
    </subcellularLocation>
</comment>
<comment type="similarity">
    <text evidence="3">Belongs to the peroxisomal membrane protein PXMP2/4 family.</text>
</comment>
<proteinExistence type="evidence at transcript level"/>
<protein>
    <recommendedName>
        <fullName>Peroxisomal membrane protein 4</fullName>
    </recommendedName>
</protein>
<dbReference type="EMBL" id="BC142155">
    <property type="protein sequence ID" value="AAI42156.1"/>
    <property type="molecule type" value="mRNA"/>
</dbReference>
<dbReference type="RefSeq" id="NP_001092633.1">
    <property type="nucleotide sequence ID" value="NM_001099163.1"/>
</dbReference>
<dbReference type="FunCoup" id="A5PJL1">
    <property type="interactions" value="479"/>
</dbReference>
<dbReference type="STRING" id="9913.ENSBTAP00000051908"/>
<dbReference type="GlyCosmos" id="A5PJL1">
    <property type="glycosylation" value="1 site, No reported glycans"/>
</dbReference>
<dbReference type="GlyGen" id="A5PJL1">
    <property type="glycosylation" value="1 site"/>
</dbReference>
<dbReference type="PaxDb" id="9913-ENSBTAP00000051908"/>
<dbReference type="Ensembl" id="ENSBTAT00000053065.2">
    <property type="protein sequence ID" value="ENSBTAP00000051908.1"/>
    <property type="gene ID" value="ENSBTAG00000038738.3"/>
</dbReference>
<dbReference type="GeneID" id="617160"/>
<dbReference type="KEGG" id="bta:617160"/>
<dbReference type="CTD" id="11264"/>
<dbReference type="VEuPathDB" id="HostDB:ENSBTAG00000038738"/>
<dbReference type="VGNC" id="VGNC:33585">
    <property type="gene designation" value="PXMP4"/>
</dbReference>
<dbReference type="eggNOG" id="ENOG502RXMH">
    <property type="taxonomic scope" value="Eukaryota"/>
</dbReference>
<dbReference type="GeneTree" id="ENSGT00390000001562"/>
<dbReference type="HOGENOM" id="CLU_054132_1_0_1"/>
<dbReference type="InParanoid" id="A5PJL1"/>
<dbReference type="OrthoDB" id="39659at2759"/>
<dbReference type="TreeFam" id="TF105313"/>
<dbReference type="Proteomes" id="UP000009136">
    <property type="component" value="Chromosome 13"/>
</dbReference>
<dbReference type="Bgee" id="ENSBTAG00000038738">
    <property type="expression patterns" value="Expressed in oocyte and 105 other cell types or tissues"/>
</dbReference>
<dbReference type="GO" id="GO:0005778">
    <property type="term" value="C:peroxisomal membrane"/>
    <property type="evidence" value="ECO:0000318"/>
    <property type="project" value="GO_Central"/>
</dbReference>
<dbReference type="InterPro" id="IPR019531">
    <property type="entry name" value="Pmp4"/>
</dbReference>
<dbReference type="PANTHER" id="PTHR15460">
    <property type="entry name" value="PEROXISOMAL MEMBRANE PROTEIN 4"/>
    <property type="match status" value="1"/>
</dbReference>
<dbReference type="PANTHER" id="PTHR15460:SF3">
    <property type="entry name" value="PEROXISOMAL MEMBRANE PROTEIN 4"/>
    <property type="match status" value="1"/>
</dbReference>
<dbReference type="Pfam" id="PF02466">
    <property type="entry name" value="Tim17"/>
    <property type="match status" value="1"/>
</dbReference>
<dbReference type="PIRSF" id="PIRSF013674">
    <property type="entry name" value="PXMP4"/>
    <property type="match status" value="1"/>
</dbReference>